<feature type="chain" id="PRO_0000281824" description="Histone-lysine N-methyltransferase SETDB2">
    <location>
        <begin position="1"/>
        <end position="713"/>
    </location>
</feature>
<feature type="domain" description="MBD" evidence="5">
    <location>
        <begin position="161"/>
        <end position="233"/>
    </location>
</feature>
<feature type="domain" description="Pre-SET" evidence="3">
    <location>
        <begin position="294"/>
        <end position="367"/>
    </location>
</feature>
<feature type="domain" description="SET" evidence="4">
    <location>
        <begin position="370"/>
        <end position="688"/>
    </location>
</feature>
<feature type="region of interest" description="Disordered" evidence="6">
    <location>
        <begin position="78"/>
        <end position="109"/>
    </location>
</feature>
<feature type="region of interest" description="Disordered" evidence="6">
    <location>
        <begin position="511"/>
        <end position="549"/>
    </location>
</feature>
<feature type="region of interest" description="Disordered" evidence="6">
    <location>
        <begin position="579"/>
        <end position="608"/>
    </location>
</feature>
<feature type="compositionally biased region" description="Polar residues" evidence="6">
    <location>
        <begin position="87"/>
        <end position="109"/>
    </location>
</feature>
<feature type="compositionally biased region" description="Basic and acidic residues" evidence="6">
    <location>
        <begin position="511"/>
        <end position="534"/>
    </location>
</feature>
<feature type="compositionally biased region" description="Basic and acidic residues" evidence="6">
    <location>
        <begin position="579"/>
        <end position="592"/>
    </location>
</feature>
<feature type="binding site" evidence="1">
    <location>
        <position position="296"/>
    </location>
    <ligand>
        <name>Zn(2+)</name>
        <dbReference type="ChEBI" id="CHEBI:29105"/>
        <label>1</label>
    </ligand>
</feature>
<feature type="binding site" evidence="1">
    <location>
        <position position="296"/>
    </location>
    <ligand>
        <name>Zn(2+)</name>
        <dbReference type="ChEBI" id="CHEBI:29105"/>
        <label>2</label>
    </ligand>
</feature>
<feature type="binding site" evidence="1">
    <location>
        <position position="298"/>
    </location>
    <ligand>
        <name>Zn(2+)</name>
        <dbReference type="ChEBI" id="CHEBI:29105"/>
        <label>1</label>
    </ligand>
</feature>
<feature type="binding site" evidence="1">
    <location>
        <position position="302"/>
    </location>
    <ligand>
        <name>Zn(2+)</name>
        <dbReference type="ChEBI" id="CHEBI:29105"/>
        <label>1</label>
    </ligand>
</feature>
<feature type="binding site" evidence="1">
    <location>
        <position position="302"/>
    </location>
    <ligand>
        <name>Zn(2+)</name>
        <dbReference type="ChEBI" id="CHEBI:29105"/>
        <label>3</label>
    </ligand>
</feature>
<feature type="binding site" evidence="1">
    <location>
        <position position="308"/>
    </location>
    <ligand>
        <name>Zn(2+)</name>
        <dbReference type="ChEBI" id="CHEBI:29105"/>
        <label>1</label>
    </ligand>
</feature>
<feature type="binding site" evidence="1">
    <location>
        <position position="310"/>
    </location>
    <ligand>
        <name>Zn(2+)</name>
        <dbReference type="ChEBI" id="CHEBI:29105"/>
        <label>2</label>
    </ligand>
</feature>
<feature type="binding site" evidence="1">
    <location>
        <position position="348"/>
    </location>
    <ligand>
        <name>Zn(2+)</name>
        <dbReference type="ChEBI" id="CHEBI:29105"/>
        <label>2</label>
    </ligand>
</feature>
<feature type="binding site" evidence="1">
    <location>
        <position position="348"/>
    </location>
    <ligand>
        <name>Zn(2+)</name>
        <dbReference type="ChEBI" id="CHEBI:29105"/>
        <label>3</label>
    </ligand>
</feature>
<feature type="binding site" evidence="1">
    <location>
        <position position="352"/>
    </location>
    <ligand>
        <name>Zn(2+)</name>
        <dbReference type="ChEBI" id="CHEBI:29105"/>
        <label>2</label>
    </ligand>
</feature>
<feature type="binding site" evidence="1">
    <location>
        <position position="354"/>
    </location>
    <ligand>
        <name>Zn(2+)</name>
        <dbReference type="ChEBI" id="CHEBI:29105"/>
        <label>3</label>
    </ligand>
</feature>
<feature type="binding site" evidence="1">
    <location>
        <position position="359"/>
    </location>
    <ligand>
        <name>Zn(2+)</name>
        <dbReference type="ChEBI" id="CHEBI:29105"/>
        <label>3</label>
    </ligand>
</feature>
<feature type="binding site" evidence="1">
    <location>
        <begin position="380"/>
        <end position="382"/>
    </location>
    <ligand>
        <name>S-adenosyl-L-methionine</name>
        <dbReference type="ChEBI" id="CHEBI:59789"/>
    </ligand>
</feature>
<feature type="binding site" evidence="4">
    <location>
        <position position="642"/>
    </location>
    <ligand>
        <name>S-adenosyl-L-methionine</name>
        <dbReference type="ChEBI" id="CHEBI:59789"/>
    </ligand>
</feature>
<feature type="binding site" evidence="1">
    <location>
        <begin position="645"/>
        <end position="646"/>
    </location>
    <ligand>
        <name>S-adenosyl-L-methionine</name>
        <dbReference type="ChEBI" id="CHEBI:59789"/>
    </ligand>
</feature>
<feature type="binding site" evidence="1">
    <location>
        <position position="648"/>
    </location>
    <ligand>
        <name>Zn(2+)</name>
        <dbReference type="ChEBI" id="CHEBI:29105"/>
        <label>4</label>
    </ligand>
</feature>
<feature type="binding site" evidence="1">
    <location>
        <position position="701"/>
    </location>
    <ligand>
        <name>Zn(2+)</name>
        <dbReference type="ChEBI" id="CHEBI:29105"/>
        <label>4</label>
    </ligand>
</feature>
<feature type="binding site" evidence="1">
    <location>
        <position position="703"/>
    </location>
    <ligand>
        <name>Zn(2+)</name>
        <dbReference type="ChEBI" id="CHEBI:29105"/>
        <label>4</label>
    </ligand>
</feature>
<feature type="binding site" evidence="1">
    <location>
        <position position="708"/>
    </location>
    <ligand>
        <name>Zn(2+)</name>
        <dbReference type="ChEBI" id="CHEBI:29105"/>
        <label>4</label>
    </ligand>
</feature>
<feature type="splice variant" id="VSP_024063" description="In isoform 2." evidence="7">
    <original>GMFITYSNPEVNTHRSN</original>
    <variation>D</variation>
    <location>
        <begin position="70"/>
        <end position="86"/>
    </location>
</feature>
<feature type="splice variant" id="VSP_024064" description="In isoform 2." evidence="7">
    <original>SPGKKVFLPVKNKADNLVKKEAPLHISFHRHICSRTCL</original>
    <variation>YVYVIRVSAPSVCCLLNIPKSLTPFIKFNSRCLCLLVN</variation>
    <location>
        <begin position="119"/>
        <end position="156"/>
    </location>
</feature>
<feature type="splice variant" id="VSP_024065" description="In isoform 2." evidence="7">
    <location>
        <begin position="157"/>
        <end position="713"/>
    </location>
</feature>
<organism>
    <name type="scientific">Mus musculus</name>
    <name type="common">Mouse</name>
    <dbReference type="NCBI Taxonomy" id="10090"/>
    <lineage>
        <taxon>Eukaryota</taxon>
        <taxon>Metazoa</taxon>
        <taxon>Chordata</taxon>
        <taxon>Craniata</taxon>
        <taxon>Vertebrata</taxon>
        <taxon>Euteleostomi</taxon>
        <taxon>Mammalia</taxon>
        <taxon>Eutheria</taxon>
        <taxon>Euarchontoglires</taxon>
        <taxon>Glires</taxon>
        <taxon>Rodentia</taxon>
        <taxon>Myomorpha</taxon>
        <taxon>Muroidea</taxon>
        <taxon>Muridae</taxon>
        <taxon>Murinae</taxon>
        <taxon>Mus</taxon>
        <taxon>Mus</taxon>
    </lineage>
</organism>
<sequence length="713" mass="80636">MEEKNGDAKTFWMELQDDGKVDLMFEKTQNVLHSLKQKIKDGSATNGDYVQAMNLVNEATLSNTQTLEKGMFITYSNPEVNTHRSNHTPVTQSEQENKSSAVPSASCDNSCPKGCTIPSPGKKVFLPVKNKADNLVKKEAPLHISFHRHICSRTCLMETPLSLKGENPLQLPIRCHFQRRHAKTNSHSSALHVNYKTPCGRNLRNMEEVFHYLLETECNFLFTDNFSFNTYVQLTRNHPKQNEVVSDVDISNGVESVSIPFCNEIDNSKLPRFKYRNTVWPRIYHLNFSNMFSDSCDCSEGCIDIKKCACLQLTAKNAKACPLSSDGECAGYKYKRLQRLIPTGIYECNLLCKCNKQMCQNRVIQHGVRVRLQVFKSEKKGWGVRCLDDIDKGTFVCIYSGRLLRRATPEKTNIGENGREQQHIVKNSFSKKRKLEVVCSDCDAHCDSPKAEDCPPKLSGDLKEPAVEMNHRNISRTQHHSVIRRTKSKTTVFHYSEKNMGFVCSDSAAPEDKNGFKPAQEHVNSEARRAHEDLSSNPAGDSEDTQLTESDVIDITASREDSAPAYRCKHATIVDRKDTKQVLEVPGKKSQEEEPAASQSQQALCDEELPSERTKIPSASLMQLSKESLFLLDASKEGNVGRFLNHSCCPNLWVQNVFVETHDRNFPLVAFFTNRYVKARTELTWDYGYEAGATPAKEILCQCGFNKCRKKLI</sequence>
<dbReference type="EC" id="2.1.1.366" evidence="2"/>
<dbReference type="EMBL" id="AK089197">
    <property type="protein sequence ID" value="BAC40789.1"/>
    <property type="molecule type" value="mRNA"/>
</dbReference>
<dbReference type="EMBL" id="AC114007">
    <property type="status" value="NOT_ANNOTATED_CDS"/>
    <property type="molecule type" value="Genomic_DNA"/>
</dbReference>
<dbReference type="FunCoup" id="Q8C267">
    <property type="interactions" value="2892"/>
</dbReference>
<dbReference type="IntAct" id="Q8C267">
    <property type="interactions" value="1"/>
</dbReference>
<dbReference type="MINT" id="Q8C267"/>
<dbReference type="STRING" id="10090.ENSMUSP00000124696"/>
<dbReference type="GlyGen" id="Q8C267">
    <property type="glycosylation" value="1 site"/>
</dbReference>
<dbReference type="iPTMnet" id="Q8C267"/>
<dbReference type="PhosphoSitePlus" id="Q8C267"/>
<dbReference type="jPOST" id="Q8C267"/>
<dbReference type="PaxDb" id="10090-ENSMUSP00000093450"/>
<dbReference type="ProteomicsDB" id="261324">
    <molecule id="Q8C267-1"/>
</dbReference>
<dbReference type="ProteomicsDB" id="261325">
    <molecule id="Q8C267-2"/>
</dbReference>
<dbReference type="Antibodypedia" id="23922">
    <property type="antibodies" value="239 antibodies from 35 providers"/>
</dbReference>
<dbReference type="Ensembl" id="ENSMUST00000095775.10">
    <molecule id="Q8C267-1"/>
    <property type="protein sequence ID" value="ENSMUSP00000093450.4"/>
    <property type="gene ID" value="ENSMUSG00000071350.13"/>
</dbReference>
<dbReference type="Ensembl" id="ENSMUST00000111253.3">
    <molecule id="Q8C267-2"/>
    <property type="protein sequence ID" value="ENSMUSP00000106884.3"/>
    <property type="gene ID" value="ENSMUSG00000071350.13"/>
</dbReference>
<dbReference type="UCSC" id="uc007uei.1">
    <molecule id="Q8C267-1"/>
    <property type="organism name" value="mouse"/>
</dbReference>
<dbReference type="UCSC" id="uc007uej.1">
    <molecule id="Q8C267-2"/>
    <property type="organism name" value="mouse"/>
</dbReference>
<dbReference type="AGR" id="MGI:2685139"/>
<dbReference type="MGI" id="MGI:2685139">
    <property type="gene designation" value="Setdb2"/>
</dbReference>
<dbReference type="VEuPathDB" id="HostDB:ENSMUSG00000071350"/>
<dbReference type="eggNOG" id="KOG1141">
    <property type="taxonomic scope" value="Eukaryota"/>
</dbReference>
<dbReference type="GeneTree" id="ENSGT00940000158209"/>
<dbReference type="HOGENOM" id="CLU_1834517_0_0_1"/>
<dbReference type="InParanoid" id="Q8C267"/>
<dbReference type="OrthoDB" id="5792673at2759"/>
<dbReference type="PhylomeDB" id="Q8C267"/>
<dbReference type="TreeFam" id="TF106411"/>
<dbReference type="Reactome" id="R-MMU-3214841">
    <property type="pathway name" value="PKMTs methylate histone lysines"/>
</dbReference>
<dbReference type="PRO" id="PR:Q8C267"/>
<dbReference type="Proteomes" id="UP000000589">
    <property type="component" value="Chromosome 14"/>
</dbReference>
<dbReference type="RNAct" id="Q8C267">
    <property type="molecule type" value="protein"/>
</dbReference>
<dbReference type="Bgee" id="ENSMUSG00000071350">
    <property type="expression patterns" value="Expressed in spermatogonium and 201 other cell types or tissues"/>
</dbReference>
<dbReference type="ExpressionAtlas" id="Q8C267">
    <property type="expression patterns" value="baseline and differential"/>
</dbReference>
<dbReference type="GO" id="GO:0005694">
    <property type="term" value="C:chromosome"/>
    <property type="evidence" value="ECO:0007669"/>
    <property type="project" value="UniProtKB-SubCell"/>
</dbReference>
<dbReference type="GO" id="GO:0005829">
    <property type="term" value="C:cytosol"/>
    <property type="evidence" value="ECO:0007669"/>
    <property type="project" value="Ensembl"/>
</dbReference>
<dbReference type="GO" id="GO:0005654">
    <property type="term" value="C:nucleoplasm"/>
    <property type="evidence" value="ECO:0007669"/>
    <property type="project" value="Ensembl"/>
</dbReference>
<dbReference type="GO" id="GO:0005634">
    <property type="term" value="C:nucleus"/>
    <property type="evidence" value="ECO:0000250"/>
    <property type="project" value="UniProtKB"/>
</dbReference>
<dbReference type="GO" id="GO:0003677">
    <property type="term" value="F:DNA binding"/>
    <property type="evidence" value="ECO:0007669"/>
    <property type="project" value="InterPro"/>
</dbReference>
<dbReference type="GO" id="GO:0046974">
    <property type="term" value="F:histone H3K9 methyltransferase activity"/>
    <property type="evidence" value="ECO:0000250"/>
    <property type="project" value="UniProtKB"/>
</dbReference>
<dbReference type="GO" id="GO:0140948">
    <property type="term" value="F:histone H3K9 monomethyltransferase activity"/>
    <property type="evidence" value="ECO:0007669"/>
    <property type="project" value="RHEA"/>
</dbReference>
<dbReference type="GO" id="GO:0008270">
    <property type="term" value="F:zinc ion binding"/>
    <property type="evidence" value="ECO:0007669"/>
    <property type="project" value="InterPro"/>
</dbReference>
<dbReference type="GO" id="GO:0051301">
    <property type="term" value="P:cell division"/>
    <property type="evidence" value="ECO:0007669"/>
    <property type="project" value="UniProtKB-KW"/>
</dbReference>
<dbReference type="GO" id="GO:0007059">
    <property type="term" value="P:chromosome segregation"/>
    <property type="evidence" value="ECO:0000250"/>
    <property type="project" value="UniProtKB"/>
</dbReference>
<dbReference type="GO" id="GO:0001947">
    <property type="term" value="P:heart looping"/>
    <property type="evidence" value="ECO:0000250"/>
    <property type="project" value="UniProtKB"/>
</dbReference>
<dbReference type="GO" id="GO:0070986">
    <property type="term" value="P:left/right axis specification"/>
    <property type="evidence" value="ECO:0000250"/>
    <property type="project" value="UniProtKB"/>
</dbReference>
<dbReference type="GO" id="GO:0032259">
    <property type="term" value="P:methylation"/>
    <property type="evidence" value="ECO:0007669"/>
    <property type="project" value="UniProtKB-KW"/>
</dbReference>
<dbReference type="GO" id="GO:0000278">
    <property type="term" value="P:mitotic cell cycle"/>
    <property type="evidence" value="ECO:0000250"/>
    <property type="project" value="UniProtKB"/>
</dbReference>
<dbReference type="GO" id="GO:0045892">
    <property type="term" value="P:negative regulation of DNA-templated transcription"/>
    <property type="evidence" value="ECO:0000250"/>
    <property type="project" value="UniProtKB"/>
</dbReference>
<dbReference type="GO" id="GO:0045814">
    <property type="term" value="P:negative regulation of gene expression, epigenetic"/>
    <property type="evidence" value="ECO:0007669"/>
    <property type="project" value="UniProtKB-ARBA"/>
</dbReference>
<dbReference type="CDD" id="cd01395">
    <property type="entry name" value="HMT_MBD"/>
    <property type="match status" value="1"/>
</dbReference>
<dbReference type="FunFam" id="2.170.270.10:FF:000029">
    <property type="entry name" value="Histone-lysine N-methyltransferase SETDB2"/>
    <property type="match status" value="1"/>
</dbReference>
<dbReference type="Gene3D" id="3.30.890.10">
    <property type="entry name" value="Methyl-cpg-binding Protein 2, Chain A"/>
    <property type="match status" value="1"/>
</dbReference>
<dbReference type="Gene3D" id="2.170.270.10">
    <property type="entry name" value="SET domain"/>
    <property type="match status" value="2"/>
</dbReference>
<dbReference type="InterPro" id="IPR016177">
    <property type="entry name" value="DNA-bd_dom_sf"/>
</dbReference>
<dbReference type="InterPro" id="IPR001739">
    <property type="entry name" value="Methyl_CpG_DNA-bd"/>
</dbReference>
<dbReference type="InterPro" id="IPR007728">
    <property type="entry name" value="Pre-SET_dom"/>
</dbReference>
<dbReference type="InterPro" id="IPR001214">
    <property type="entry name" value="SET_dom"/>
</dbReference>
<dbReference type="InterPro" id="IPR046341">
    <property type="entry name" value="SET_dom_sf"/>
</dbReference>
<dbReference type="InterPro" id="IPR047232">
    <property type="entry name" value="SETDB1/2-like_MBD"/>
</dbReference>
<dbReference type="InterPro" id="IPR051516">
    <property type="entry name" value="SETDB_methyltransferase"/>
</dbReference>
<dbReference type="PANTHER" id="PTHR46024">
    <property type="entry name" value="HISTONE-LYSINE N-METHYLTRANSFERASE EGGLESS"/>
    <property type="match status" value="1"/>
</dbReference>
<dbReference type="PANTHER" id="PTHR46024:SF3">
    <property type="entry name" value="HISTONE-LYSINE N-METHYLTRANSFERASE SETDB2"/>
    <property type="match status" value="1"/>
</dbReference>
<dbReference type="Pfam" id="PF01429">
    <property type="entry name" value="MBD"/>
    <property type="match status" value="1"/>
</dbReference>
<dbReference type="Pfam" id="PF05033">
    <property type="entry name" value="Pre-SET"/>
    <property type="match status" value="1"/>
</dbReference>
<dbReference type="Pfam" id="PF00856">
    <property type="entry name" value="SET"/>
    <property type="match status" value="1"/>
</dbReference>
<dbReference type="SMART" id="SM00391">
    <property type="entry name" value="MBD"/>
    <property type="match status" value="1"/>
</dbReference>
<dbReference type="SMART" id="SM00468">
    <property type="entry name" value="PreSET"/>
    <property type="match status" value="1"/>
</dbReference>
<dbReference type="SMART" id="SM00317">
    <property type="entry name" value="SET"/>
    <property type="match status" value="1"/>
</dbReference>
<dbReference type="SUPFAM" id="SSF54171">
    <property type="entry name" value="DNA-binding domain"/>
    <property type="match status" value="1"/>
</dbReference>
<dbReference type="SUPFAM" id="SSF82199">
    <property type="entry name" value="SET domain"/>
    <property type="match status" value="1"/>
</dbReference>
<dbReference type="PROSITE" id="PS50982">
    <property type="entry name" value="MBD"/>
    <property type="match status" value="1"/>
</dbReference>
<dbReference type="PROSITE" id="PS50867">
    <property type="entry name" value="PRE_SET"/>
    <property type="match status" value="1"/>
</dbReference>
<dbReference type="PROSITE" id="PS50280">
    <property type="entry name" value="SET"/>
    <property type="match status" value="1"/>
</dbReference>
<protein>
    <recommendedName>
        <fullName>Histone-lysine N-methyltransferase SETDB2</fullName>
        <ecNumber evidence="2">2.1.1.366</ecNumber>
    </recommendedName>
    <alternativeName>
        <fullName>SET domain bifurcated 2</fullName>
    </alternativeName>
</protein>
<reference key="1">
    <citation type="journal article" date="2005" name="Science">
        <title>The transcriptional landscape of the mammalian genome.</title>
        <authorList>
            <person name="Carninci P."/>
            <person name="Kasukawa T."/>
            <person name="Katayama S."/>
            <person name="Gough J."/>
            <person name="Frith M.C."/>
            <person name="Maeda N."/>
            <person name="Oyama R."/>
            <person name="Ravasi T."/>
            <person name="Lenhard B."/>
            <person name="Wells C."/>
            <person name="Kodzius R."/>
            <person name="Shimokawa K."/>
            <person name="Bajic V.B."/>
            <person name="Brenner S.E."/>
            <person name="Batalov S."/>
            <person name="Forrest A.R."/>
            <person name="Zavolan M."/>
            <person name="Davis M.J."/>
            <person name="Wilming L.G."/>
            <person name="Aidinis V."/>
            <person name="Allen J.E."/>
            <person name="Ambesi-Impiombato A."/>
            <person name="Apweiler R."/>
            <person name="Aturaliya R.N."/>
            <person name="Bailey T.L."/>
            <person name="Bansal M."/>
            <person name="Baxter L."/>
            <person name="Beisel K.W."/>
            <person name="Bersano T."/>
            <person name="Bono H."/>
            <person name="Chalk A.M."/>
            <person name="Chiu K.P."/>
            <person name="Choudhary V."/>
            <person name="Christoffels A."/>
            <person name="Clutterbuck D.R."/>
            <person name="Crowe M.L."/>
            <person name="Dalla E."/>
            <person name="Dalrymple B.P."/>
            <person name="de Bono B."/>
            <person name="Della Gatta G."/>
            <person name="di Bernardo D."/>
            <person name="Down T."/>
            <person name="Engstrom P."/>
            <person name="Fagiolini M."/>
            <person name="Faulkner G."/>
            <person name="Fletcher C.F."/>
            <person name="Fukushima T."/>
            <person name="Furuno M."/>
            <person name="Futaki S."/>
            <person name="Gariboldi M."/>
            <person name="Georgii-Hemming P."/>
            <person name="Gingeras T.R."/>
            <person name="Gojobori T."/>
            <person name="Green R.E."/>
            <person name="Gustincich S."/>
            <person name="Harbers M."/>
            <person name="Hayashi Y."/>
            <person name="Hensch T.K."/>
            <person name="Hirokawa N."/>
            <person name="Hill D."/>
            <person name="Huminiecki L."/>
            <person name="Iacono M."/>
            <person name="Ikeo K."/>
            <person name="Iwama A."/>
            <person name="Ishikawa T."/>
            <person name="Jakt M."/>
            <person name="Kanapin A."/>
            <person name="Katoh M."/>
            <person name="Kawasawa Y."/>
            <person name="Kelso J."/>
            <person name="Kitamura H."/>
            <person name="Kitano H."/>
            <person name="Kollias G."/>
            <person name="Krishnan S.P."/>
            <person name="Kruger A."/>
            <person name="Kummerfeld S.K."/>
            <person name="Kurochkin I.V."/>
            <person name="Lareau L.F."/>
            <person name="Lazarevic D."/>
            <person name="Lipovich L."/>
            <person name="Liu J."/>
            <person name="Liuni S."/>
            <person name="McWilliam S."/>
            <person name="Madan Babu M."/>
            <person name="Madera M."/>
            <person name="Marchionni L."/>
            <person name="Matsuda H."/>
            <person name="Matsuzawa S."/>
            <person name="Miki H."/>
            <person name="Mignone F."/>
            <person name="Miyake S."/>
            <person name="Morris K."/>
            <person name="Mottagui-Tabar S."/>
            <person name="Mulder N."/>
            <person name="Nakano N."/>
            <person name="Nakauchi H."/>
            <person name="Ng P."/>
            <person name="Nilsson R."/>
            <person name="Nishiguchi S."/>
            <person name="Nishikawa S."/>
            <person name="Nori F."/>
            <person name="Ohara O."/>
            <person name="Okazaki Y."/>
            <person name="Orlando V."/>
            <person name="Pang K.C."/>
            <person name="Pavan W.J."/>
            <person name="Pavesi G."/>
            <person name="Pesole G."/>
            <person name="Petrovsky N."/>
            <person name="Piazza S."/>
            <person name="Reed J."/>
            <person name="Reid J.F."/>
            <person name="Ring B.Z."/>
            <person name="Ringwald M."/>
            <person name="Rost B."/>
            <person name="Ruan Y."/>
            <person name="Salzberg S.L."/>
            <person name="Sandelin A."/>
            <person name="Schneider C."/>
            <person name="Schoenbach C."/>
            <person name="Sekiguchi K."/>
            <person name="Semple C.A."/>
            <person name="Seno S."/>
            <person name="Sessa L."/>
            <person name="Sheng Y."/>
            <person name="Shibata Y."/>
            <person name="Shimada H."/>
            <person name="Shimada K."/>
            <person name="Silva D."/>
            <person name="Sinclair B."/>
            <person name="Sperling S."/>
            <person name="Stupka E."/>
            <person name="Sugiura K."/>
            <person name="Sultana R."/>
            <person name="Takenaka Y."/>
            <person name="Taki K."/>
            <person name="Tammoja K."/>
            <person name="Tan S.L."/>
            <person name="Tang S."/>
            <person name="Taylor M.S."/>
            <person name="Tegner J."/>
            <person name="Teichmann S.A."/>
            <person name="Ueda H.R."/>
            <person name="van Nimwegen E."/>
            <person name="Verardo R."/>
            <person name="Wei C.L."/>
            <person name="Yagi K."/>
            <person name="Yamanishi H."/>
            <person name="Zabarovsky E."/>
            <person name="Zhu S."/>
            <person name="Zimmer A."/>
            <person name="Hide W."/>
            <person name="Bult C."/>
            <person name="Grimmond S.M."/>
            <person name="Teasdale R.D."/>
            <person name="Liu E.T."/>
            <person name="Brusic V."/>
            <person name="Quackenbush J."/>
            <person name="Wahlestedt C."/>
            <person name="Mattick J.S."/>
            <person name="Hume D.A."/>
            <person name="Kai C."/>
            <person name="Sasaki D."/>
            <person name="Tomaru Y."/>
            <person name="Fukuda S."/>
            <person name="Kanamori-Katayama M."/>
            <person name="Suzuki M."/>
            <person name="Aoki J."/>
            <person name="Arakawa T."/>
            <person name="Iida J."/>
            <person name="Imamura K."/>
            <person name="Itoh M."/>
            <person name="Kato T."/>
            <person name="Kawaji H."/>
            <person name="Kawagashira N."/>
            <person name="Kawashima T."/>
            <person name="Kojima M."/>
            <person name="Kondo S."/>
            <person name="Konno H."/>
            <person name="Nakano K."/>
            <person name="Ninomiya N."/>
            <person name="Nishio T."/>
            <person name="Okada M."/>
            <person name="Plessy C."/>
            <person name="Shibata K."/>
            <person name="Shiraki T."/>
            <person name="Suzuki S."/>
            <person name="Tagami M."/>
            <person name="Waki K."/>
            <person name="Watahiki A."/>
            <person name="Okamura-Oho Y."/>
            <person name="Suzuki H."/>
            <person name="Kawai J."/>
            <person name="Hayashizaki Y."/>
        </authorList>
    </citation>
    <scope>NUCLEOTIDE SEQUENCE [LARGE SCALE MRNA] (ISOFORM 2)</scope>
    <source>
        <strain>NOD</strain>
    </source>
</reference>
<reference key="2">
    <citation type="journal article" date="2009" name="PLoS Biol.">
        <title>Lineage-specific biology revealed by a finished genome assembly of the mouse.</title>
        <authorList>
            <person name="Church D.M."/>
            <person name="Goodstadt L."/>
            <person name="Hillier L.W."/>
            <person name="Zody M.C."/>
            <person name="Goldstein S."/>
            <person name="She X."/>
            <person name="Bult C.J."/>
            <person name="Agarwala R."/>
            <person name="Cherry J.L."/>
            <person name="DiCuccio M."/>
            <person name="Hlavina W."/>
            <person name="Kapustin Y."/>
            <person name="Meric P."/>
            <person name="Maglott D."/>
            <person name="Birtle Z."/>
            <person name="Marques A.C."/>
            <person name="Graves T."/>
            <person name="Zhou S."/>
            <person name="Teague B."/>
            <person name="Potamousis K."/>
            <person name="Churas C."/>
            <person name="Place M."/>
            <person name="Herschleb J."/>
            <person name="Runnheim R."/>
            <person name="Forrest D."/>
            <person name="Amos-Landgraf J."/>
            <person name="Schwartz D.C."/>
            <person name="Cheng Z."/>
            <person name="Lindblad-Toh K."/>
            <person name="Eichler E.E."/>
            <person name="Ponting C.P."/>
        </authorList>
    </citation>
    <scope>NUCLEOTIDE SEQUENCE [LARGE SCALE GENOMIC DNA]</scope>
</reference>
<keyword id="KW-0025">Alternative splicing</keyword>
<keyword id="KW-0131">Cell cycle</keyword>
<keyword id="KW-0132">Cell division</keyword>
<keyword id="KW-0156">Chromatin regulator</keyword>
<keyword id="KW-0158">Chromosome</keyword>
<keyword id="KW-0217">Developmental protein</keyword>
<keyword id="KW-0479">Metal-binding</keyword>
<keyword id="KW-0489">Methyltransferase</keyword>
<keyword id="KW-0498">Mitosis</keyword>
<keyword id="KW-0539">Nucleus</keyword>
<keyword id="KW-1185">Reference proteome</keyword>
<keyword id="KW-0949">S-adenosyl-L-methionine</keyword>
<keyword id="KW-0808">Transferase</keyword>
<keyword id="KW-0862">Zinc</keyword>
<evidence type="ECO:0000250" key="1"/>
<evidence type="ECO:0000250" key="2">
    <source>
        <dbReference type="UniProtKB" id="Q96T68"/>
    </source>
</evidence>
<evidence type="ECO:0000255" key="3">
    <source>
        <dbReference type="PROSITE-ProRule" id="PRU00157"/>
    </source>
</evidence>
<evidence type="ECO:0000255" key="4">
    <source>
        <dbReference type="PROSITE-ProRule" id="PRU00190"/>
    </source>
</evidence>
<evidence type="ECO:0000255" key="5">
    <source>
        <dbReference type="PROSITE-ProRule" id="PRU00338"/>
    </source>
</evidence>
<evidence type="ECO:0000256" key="6">
    <source>
        <dbReference type="SAM" id="MobiDB-lite"/>
    </source>
</evidence>
<evidence type="ECO:0000303" key="7">
    <source>
    </source>
</evidence>
<name>SETB2_MOUSE</name>
<comment type="function">
    <text evidence="1">Histone methyltransferase involved in left-right axis specification in early development and mitosis. Specifically trimethylates 'Lys-9' of histone H3 (H3K9me3). H3K9me3 is a specific tag for epigenetic transcriptional repression that recruits HP1 (CBX1, CBX3 and/or CBX5) proteins to methylated histones. Contributes to H3K9me3 in both the interspersed repetitive elements and centromere-associated repeats. Plays a role in chromosome condensation and segregation during mitosis (By similarity).</text>
</comment>
<comment type="catalytic activity">
    <reaction evidence="2">
        <text>N(6),N(6)-dimethyl-L-lysyl(9)-[histone H3] + S-adenosyl-L-methionine = N(6),N(6),N(6)-trimethyl-L-lysyl(9)-[histone H3] + S-adenosyl-L-homocysteine + H(+)</text>
        <dbReference type="Rhea" id="RHEA:60288"/>
        <dbReference type="Rhea" id="RHEA-COMP:15538"/>
        <dbReference type="Rhea" id="RHEA-COMP:15541"/>
        <dbReference type="ChEBI" id="CHEBI:15378"/>
        <dbReference type="ChEBI" id="CHEBI:57856"/>
        <dbReference type="ChEBI" id="CHEBI:59789"/>
        <dbReference type="ChEBI" id="CHEBI:61961"/>
        <dbReference type="ChEBI" id="CHEBI:61976"/>
        <dbReference type="EC" id="2.1.1.366"/>
    </reaction>
</comment>
<comment type="subcellular location">
    <subcellularLocation>
        <location evidence="1">Nucleus</location>
    </subcellularLocation>
    <subcellularLocation>
        <location evidence="1">Chromosome</location>
    </subcellularLocation>
</comment>
<comment type="alternative products">
    <event type="alternative splicing"/>
    <isoform>
        <id>Q8C267-1</id>
        <name>1</name>
        <sequence type="displayed"/>
    </isoform>
    <isoform>
        <id>Q8C267-2</id>
        <name>2</name>
        <sequence type="described" ref="VSP_024063 VSP_024064 VSP_024065"/>
    </isoform>
</comment>
<comment type="domain">
    <text evidence="1">In the pre-SET domain, Cys residues bind 3 zinc ions that are arranged in a triangular cluster; some of these Cys residues contribute to the binding of two zinc ions within the cluster.</text>
</comment>
<comment type="similarity">
    <text evidence="4">Belongs to the class V-like SAM-binding methyltransferase superfamily.</text>
</comment>
<proteinExistence type="evidence at transcript level"/>
<accession>Q8C267</accession>
<gene>
    <name type="primary">Setdb2</name>
    <name type="synonym">Gm293</name>
</gene>